<feature type="transit peptide" description="Mitochondrion" evidence="2">
    <location>
        <begin position="1"/>
        <end position="27"/>
    </location>
</feature>
<feature type="chain" id="PRO_0000001052" description="Alpha-aminoadipic semialdehyde synthase, mitochondrial">
    <location>
        <begin position="28"/>
        <end position="926"/>
    </location>
</feature>
<feature type="region of interest" description="Lysine-ketoglutarate reductase" evidence="8">
    <location>
        <begin position="28"/>
        <end position="476"/>
    </location>
</feature>
<feature type="region of interest" description="Saccharopine dehydrogenase" evidence="8">
    <location>
        <begin position="477"/>
        <end position="926"/>
    </location>
</feature>
<feature type="binding site" evidence="7 13">
    <location>
        <position position="488"/>
    </location>
    <ligand>
        <name>NAD(+)</name>
        <dbReference type="ChEBI" id="CHEBI:57540"/>
    </ligand>
</feature>
<feature type="binding site" evidence="7 13">
    <location>
        <position position="512"/>
    </location>
    <ligand>
        <name>NAD(+)</name>
        <dbReference type="ChEBI" id="CHEBI:57540"/>
    </ligand>
</feature>
<feature type="binding site" evidence="7 13">
    <location>
        <position position="516"/>
    </location>
    <ligand>
        <name>NAD(+)</name>
        <dbReference type="ChEBI" id="CHEBI:57540"/>
    </ligand>
</feature>
<feature type="binding site" evidence="7 13">
    <location>
        <position position="533"/>
    </location>
    <ligand>
        <name>NAD(+)</name>
        <dbReference type="ChEBI" id="CHEBI:57540"/>
    </ligand>
</feature>
<feature type="binding site" evidence="7 13">
    <location>
        <position position="554"/>
    </location>
    <ligand>
        <name>NAD(+)</name>
        <dbReference type="ChEBI" id="CHEBI:57540"/>
    </ligand>
</feature>
<feature type="binding site" evidence="7 13">
    <location>
        <position position="576"/>
    </location>
    <ligand>
        <name>NAD(+)</name>
        <dbReference type="ChEBI" id="CHEBI:57540"/>
    </ligand>
</feature>
<feature type="binding site" evidence="3">
    <location>
        <begin position="577"/>
        <end position="578"/>
    </location>
    <ligand>
        <name>L-saccharopine</name>
        <dbReference type="ChEBI" id="CHEBI:57951"/>
    </ligand>
</feature>
<feature type="binding site" evidence="7 13">
    <location>
        <position position="577"/>
    </location>
    <ligand>
        <name>NAD(+)</name>
        <dbReference type="ChEBI" id="CHEBI:57540"/>
    </ligand>
</feature>
<feature type="binding site" evidence="7 13">
    <location>
        <position position="603"/>
    </location>
    <ligand>
        <name>NAD(+)</name>
        <dbReference type="ChEBI" id="CHEBI:57540"/>
    </ligand>
</feature>
<feature type="binding site" evidence="3">
    <location>
        <position position="604"/>
    </location>
    <ligand>
        <name>L-saccharopine</name>
        <dbReference type="ChEBI" id="CHEBI:57951"/>
    </ligand>
</feature>
<feature type="binding site" evidence="7 13">
    <location>
        <position position="604"/>
    </location>
    <ligand>
        <name>NAD(+)</name>
        <dbReference type="ChEBI" id="CHEBI:57540"/>
    </ligand>
</feature>
<feature type="binding site" evidence="7 13">
    <location>
        <position position="605"/>
    </location>
    <ligand>
        <name>NAD(+)</name>
        <dbReference type="ChEBI" id="CHEBI:57540"/>
    </ligand>
</feature>
<feature type="binding site" evidence="3">
    <location>
        <position position="703"/>
    </location>
    <ligand>
        <name>L-saccharopine</name>
        <dbReference type="ChEBI" id="CHEBI:57951"/>
    </ligand>
</feature>
<feature type="binding site" evidence="3">
    <location>
        <begin position="724"/>
        <end position="726"/>
    </location>
    <ligand>
        <name>L-saccharopine</name>
        <dbReference type="ChEBI" id="CHEBI:57951"/>
    </ligand>
</feature>
<feature type="modified residue" description="N6-acetyllysine" evidence="2">
    <location>
        <position position="48"/>
    </location>
</feature>
<feature type="modified residue" description="N6-acetyllysine" evidence="2">
    <location>
        <position position="56"/>
    </location>
</feature>
<feature type="modified residue" description="N6-acetyllysine; alternate" evidence="2">
    <location>
        <position position="93"/>
    </location>
</feature>
<feature type="modified residue" description="N6-succinyllysine; alternate" evidence="2">
    <location>
        <position position="93"/>
    </location>
</feature>
<feature type="modified residue" description="N6-acetyllysine" evidence="2">
    <location>
        <position position="128"/>
    </location>
</feature>
<feature type="modified residue" description="N6-acetyllysine; alternate" evidence="2">
    <location>
        <position position="138"/>
    </location>
</feature>
<feature type="modified residue" description="N6-succinyllysine; alternate" evidence="2">
    <location>
        <position position="138"/>
    </location>
</feature>
<feature type="modified residue" description="N6-succinyllysine" evidence="2">
    <location>
        <position position="274"/>
    </location>
</feature>
<feature type="modified residue" description="N6-acetyllysine; alternate" evidence="2">
    <location>
        <position position="286"/>
    </location>
</feature>
<feature type="modified residue" description="N6-succinyllysine; alternate" evidence="2">
    <location>
        <position position="286"/>
    </location>
</feature>
<feature type="modified residue" description="N6-succinyllysine" evidence="2">
    <location>
        <position position="333"/>
    </location>
</feature>
<feature type="modified residue" description="N6-acetyllysine; alternate" evidence="2">
    <location>
        <position position="458"/>
    </location>
</feature>
<feature type="modified residue" description="N6-succinyllysine; alternate" evidence="2">
    <location>
        <position position="458"/>
    </location>
</feature>
<feature type="modified residue" description="N6-acetyllysine; alternate" evidence="2">
    <location>
        <position position="523"/>
    </location>
</feature>
<feature type="modified residue" description="N6-succinyllysine; alternate" evidence="2">
    <location>
        <position position="523"/>
    </location>
</feature>
<feature type="modified residue" description="N6-acetyllysine; alternate" evidence="2">
    <location>
        <position position="535"/>
    </location>
</feature>
<feature type="modified residue" description="N6-succinyllysine; alternate" evidence="2">
    <location>
        <position position="535"/>
    </location>
</feature>
<feature type="modified residue" description="N6-acetyllysine; alternate" evidence="2">
    <location>
        <position position="584"/>
    </location>
</feature>
<feature type="modified residue" description="N6-succinyllysine; alternate" evidence="2">
    <location>
        <position position="584"/>
    </location>
</feature>
<feature type="modified residue" description="N6-acetyllysine" evidence="2">
    <location>
        <position position="707"/>
    </location>
</feature>
<feature type="modified residue" description="N6-succinyllysine" evidence="2">
    <location>
        <position position="732"/>
    </location>
</feature>
<feature type="modified residue" description="N6-acetyllysine" evidence="2">
    <location>
        <position position="739"/>
    </location>
</feature>
<feature type="modified residue" description="N6-acetyllysine; alternate" evidence="2">
    <location>
        <position position="761"/>
    </location>
</feature>
<feature type="modified residue" description="N6-succinyllysine; alternate" evidence="2">
    <location>
        <position position="761"/>
    </location>
</feature>
<feature type="modified residue" description="N6-acetyllysine" evidence="2">
    <location>
        <position position="780"/>
    </location>
</feature>
<feature type="sequence conflict" description="In Ref. 2; CAA07619." evidence="9" ref="2">
    <original>S</original>
    <variation>C</variation>
    <location>
        <position position="589"/>
    </location>
</feature>
<feature type="strand" evidence="17">
    <location>
        <begin position="25"/>
        <end position="28"/>
    </location>
</feature>
<feature type="helix" evidence="17">
    <location>
        <begin position="44"/>
        <end position="52"/>
    </location>
</feature>
<feature type="strand" evidence="17">
    <location>
        <begin position="56"/>
        <end position="59"/>
    </location>
</feature>
<feature type="strand" evidence="16">
    <location>
        <begin position="63"/>
        <end position="67"/>
    </location>
</feature>
<feature type="helix" evidence="17">
    <location>
        <begin position="69"/>
        <end position="75"/>
    </location>
</feature>
<feature type="strand" evidence="17">
    <location>
        <begin position="87"/>
        <end position="90"/>
    </location>
</feature>
<feature type="helix" evidence="17">
    <location>
        <begin position="97"/>
        <end position="99"/>
    </location>
</feature>
<feature type="strand" evidence="17">
    <location>
        <begin position="105"/>
        <end position="108"/>
    </location>
</feature>
<feature type="helix" evidence="17">
    <location>
        <begin position="120"/>
        <end position="128"/>
    </location>
</feature>
<feature type="strand" evidence="17">
    <location>
        <begin position="132"/>
        <end position="135"/>
    </location>
</feature>
<feature type="helix" evidence="17">
    <location>
        <begin position="136"/>
        <end position="138"/>
    </location>
</feature>
<feature type="strand" evidence="16">
    <location>
        <begin position="146"/>
        <end position="149"/>
    </location>
</feature>
<feature type="helix" evidence="17">
    <location>
        <begin position="153"/>
        <end position="172"/>
    </location>
</feature>
<feature type="helix" evidence="17">
    <location>
        <begin position="178"/>
        <end position="181"/>
    </location>
</feature>
<feature type="helix" evidence="17">
    <location>
        <begin position="185"/>
        <end position="187"/>
    </location>
</feature>
<feature type="strand" evidence="17">
    <location>
        <begin position="188"/>
        <end position="190"/>
    </location>
</feature>
<feature type="helix" evidence="17">
    <location>
        <begin position="191"/>
        <end position="206"/>
    </location>
</feature>
<feature type="helix" evidence="17">
    <location>
        <begin position="212"/>
        <end position="214"/>
    </location>
</feature>
<feature type="strand" evidence="17">
    <location>
        <begin position="218"/>
        <end position="222"/>
    </location>
</feature>
<feature type="helix" evidence="17">
    <location>
        <begin position="226"/>
        <end position="235"/>
    </location>
</feature>
<feature type="strand" evidence="17">
    <location>
        <begin position="238"/>
        <end position="242"/>
    </location>
</feature>
<feature type="helix" evidence="17">
    <location>
        <begin position="245"/>
        <end position="247"/>
    </location>
</feature>
<feature type="helix" evidence="17">
    <location>
        <begin position="248"/>
        <end position="254"/>
    </location>
</feature>
<feature type="strand" evidence="17">
    <location>
        <begin position="259"/>
        <end position="265"/>
    </location>
</feature>
<feature type="helix" evidence="17">
    <location>
        <begin position="267"/>
        <end position="270"/>
    </location>
</feature>
<feature type="strand" evidence="17">
    <location>
        <begin position="271"/>
        <end position="273"/>
    </location>
</feature>
<feature type="turn" evidence="17">
    <location>
        <begin position="274"/>
        <end position="276"/>
    </location>
</feature>
<feature type="helix" evidence="17">
    <location>
        <begin position="281"/>
        <end position="286"/>
    </location>
</feature>
<feature type="helix" evidence="17">
    <location>
        <begin position="288"/>
        <end position="290"/>
    </location>
</feature>
<feature type="strand" evidence="17">
    <location>
        <begin position="291"/>
        <end position="293"/>
    </location>
</feature>
<feature type="helix" evidence="17">
    <location>
        <begin position="295"/>
        <end position="298"/>
    </location>
</feature>
<feature type="helix" evidence="17">
    <location>
        <begin position="300"/>
        <end position="302"/>
    </location>
</feature>
<feature type="strand" evidence="17">
    <location>
        <begin position="304"/>
        <end position="308"/>
    </location>
</feature>
<feature type="helix" evidence="17">
    <location>
        <begin position="322"/>
        <end position="328"/>
    </location>
</feature>
<feature type="strand" evidence="17">
    <location>
        <begin position="340"/>
        <end position="342"/>
    </location>
</feature>
<feature type="strand" evidence="17">
    <location>
        <begin position="346"/>
        <end position="348"/>
    </location>
</feature>
<feature type="strand" evidence="17">
    <location>
        <begin position="351"/>
        <end position="354"/>
    </location>
</feature>
<feature type="strand" evidence="16">
    <location>
        <begin position="359"/>
        <end position="363"/>
    </location>
</feature>
<feature type="strand" evidence="17">
    <location>
        <begin position="372"/>
        <end position="374"/>
    </location>
</feature>
<feature type="strand" evidence="17">
    <location>
        <begin position="377"/>
        <end position="379"/>
    </location>
</feature>
<feature type="strand" evidence="17">
    <location>
        <begin position="385"/>
        <end position="387"/>
    </location>
</feature>
<feature type="strand" evidence="17">
    <location>
        <begin position="392"/>
        <end position="398"/>
    </location>
</feature>
<feature type="helix" evidence="17">
    <location>
        <begin position="403"/>
        <end position="406"/>
    </location>
</feature>
<feature type="helix" evidence="17">
    <location>
        <begin position="408"/>
        <end position="419"/>
    </location>
</feature>
<feature type="helix" evidence="17">
    <location>
        <begin position="420"/>
        <end position="422"/>
    </location>
</feature>
<feature type="helix" evidence="17">
    <location>
        <begin position="423"/>
        <end position="427"/>
    </location>
</feature>
<feature type="strand" evidence="17">
    <location>
        <begin position="431"/>
        <end position="433"/>
    </location>
</feature>
<feature type="helix" evidence="17">
    <location>
        <begin position="435"/>
        <end position="437"/>
    </location>
</feature>
<feature type="helix" evidence="17">
    <location>
        <begin position="442"/>
        <end position="445"/>
    </location>
</feature>
<feature type="strand" evidence="18">
    <location>
        <begin position="448"/>
        <end position="450"/>
    </location>
</feature>
<feature type="strand" evidence="18">
    <location>
        <begin position="452"/>
        <end position="454"/>
    </location>
</feature>
<feature type="helix" evidence="18">
    <location>
        <begin position="457"/>
        <end position="460"/>
    </location>
</feature>
<feature type="helix" evidence="18">
    <location>
        <begin position="461"/>
        <end position="465"/>
    </location>
</feature>
<feature type="strand" evidence="15">
    <location>
        <begin position="483"/>
        <end position="486"/>
    </location>
</feature>
<feature type="helix" evidence="15">
    <location>
        <begin position="492"/>
        <end position="499"/>
    </location>
</feature>
<feature type="strand" evidence="15">
    <location>
        <begin position="500"/>
        <end position="503"/>
    </location>
</feature>
<feature type="strand" evidence="15">
    <location>
        <begin position="507"/>
        <end position="512"/>
    </location>
</feature>
<feature type="helix" evidence="15">
    <location>
        <begin position="514"/>
        <end position="523"/>
    </location>
</feature>
<feature type="strand" evidence="15">
    <location>
        <begin position="527"/>
        <end position="530"/>
    </location>
</feature>
<feature type="turn" evidence="15">
    <location>
        <begin position="533"/>
        <end position="535"/>
    </location>
</feature>
<feature type="helix" evidence="15">
    <location>
        <begin position="537"/>
        <end position="545"/>
    </location>
</feature>
<feature type="strand" evidence="15">
    <location>
        <begin position="548"/>
        <end position="552"/>
    </location>
</feature>
<feature type="helix" evidence="15">
    <location>
        <begin position="556"/>
        <end position="558"/>
    </location>
</feature>
<feature type="helix" evidence="15">
    <location>
        <begin position="559"/>
        <end position="569"/>
    </location>
</feature>
<feature type="strand" evidence="15">
    <location>
        <begin position="572"/>
        <end position="577"/>
    </location>
</feature>
<feature type="helix" evidence="15">
    <location>
        <begin position="581"/>
        <end position="584"/>
    </location>
</feature>
<feature type="helix" evidence="15">
    <location>
        <begin position="587"/>
        <end position="593"/>
    </location>
</feature>
<feature type="strand" evidence="15">
    <location>
        <begin position="596"/>
        <end position="598"/>
    </location>
</feature>
<feature type="turn" evidence="15">
    <location>
        <begin position="603"/>
        <end position="606"/>
    </location>
</feature>
<feature type="helix" evidence="15">
    <location>
        <begin position="607"/>
        <end position="620"/>
    </location>
</feature>
<feature type="turn" evidence="15">
    <location>
        <begin position="621"/>
        <end position="623"/>
    </location>
</feature>
<feature type="strand" evidence="15">
    <location>
        <begin position="625"/>
        <end position="637"/>
    </location>
</feature>
<feature type="helix" evidence="15">
    <location>
        <begin position="639"/>
        <end position="641"/>
    </location>
</feature>
<feature type="strand" evidence="15">
    <location>
        <begin position="650"/>
        <end position="652"/>
    </location>
</feature>
<feature type="helix" evidence="15">
    <location>
        <begin position="655"/>
        <end position="660"/>
    </location>
</feature>
<feature type="strand" evidence="15">
    <location>
        <begin position="665"/>
        <end position="669"/>
    </location>
</feature>
<feature type="strand" evidence="15">
    <location>
        <begin position="672"/>
        <end position="676"/>
    </location>
</feature>
<feature type="helix" evidence="15">
    <location>
        <begin position="679"/>
        <end position="685"/>
    </location>
</feature>
<feature type="strand" evidence="15">
    <location>
        <begin position="687"/>
        <end position="689"/>
    </location>
</feature>
<feature type="strand" evidence="15">
    <location>
        <begin position="697"/>
        <end position="701"/>
    </location>
</feature>
<feature type="strand" evidence="15">
    <location>
        <begin position="703"/>
        <end position="705"/>
    </location>
</feature>
<feature type="helix" evidence="15">
    <location>
        <begin position="708"/>
        <end position="712"/>
    </location>
</feature>
<feature type="strand" evidence="15">
    <location>
        <begin position="718"/>
        <end position="727"/>
    </location>
</feature>
<feature type="helix" evidence="15">
    <location>
        <begin position="730"/>
        <end position="740"/>
    </location>
</feature>
<feature type="helix" evidence="15">
    <location>
        <begin position="760"/>
        <end position="768"/>
    </location>
</feature>
<feature type="helix" evidence="15">
    <location>
        <begin position="775"/>
        <end position="785"/>
    </location>
</feature>
<feature type="turn" evidence="15">
    <location>
        <begin position="787"/>
        <end position="789"/>
    </location>
</feature>
<feature type="helix" evidence="15">
    <location>
        <begin position="791"/>
        <end position="800"/>
    </location>
</feature>
<feature type="turn" evidence="15">
    <location>
        <begin position="801"/>
        <end position="803"/>
    </location>
</feature>
<feature type="helix" evidence="15">
    <location>
        <begin position="814"/>
        <end position="825"/>
    </location>
</feature>
<feature type="strand" evidence="15">
    <location>
        <begin position="834"/>
        <end position="845"/>
    </location>
</feature>
<feature type="strand" evidence="15">
    <location>
        <begin position="851"/>
        <end position="861"/>
    </location>
</feature>
<feature type="strand" evidence="14">
    <location>
        <begin position="864"/>
        <end position="866"/>
    </location>
</feature>
<feature type="helix" evidence="15">
    <location>
        <begin position="869"/>
        <end position="886"/>
    </location>
</feature>
<feature type="strand" evidence="15">
    <location>
        <begin position="894"/>
        <end position="896"/>
    </location>
</feature>
<feature type="helix" evidence="15">
    <location>
        <begin position="901"/>
        <end position="910"/>
    </location>
</feature>
<feature type="turn" evidence="15">
    <location>
        <begin position="911"/>
        <end position="915"/>
    </location>
</feature>
<feature type="strand" evidence="15">
    <location>
        <begin position="917"/>
        <end position="924"/>
    </location>
</feature>
<name>AASS_HUMAN</name>
<evidence type="ECO:0000250" key="1"/>
<evidence type="ECO:0000250" key="2">
    <source>
        <dbReference type="UniProtKB" id="Q99K67"/>
    </source>
</evidence>
<evidence type="ECO:0000250" key="3">
    <source>
        <dbReference type="UniProtKB" id="Q9P4R4"/>
    </source>
</evidence>
<evidence type="ECO:0000269" key="4">
    <source>
    </source>
</evidence>
<evidence type="ECO:0000269" key="5">
    <source>
    </source>
</evidence>
<evidence type="ECO:0000269" key="6">
    <source>
    </source>
</evidence>
<evidence type="ECO:0000269" key="7">
    <source ref="8"/>
</evidence>
<evidence type="ECO:0000303" key="8">
    <source>
    </source>
</evidence>
<evidence type="ECO:0000305" key="9"/>
<evidence type="ECO:0000305" key="10">
    <source>
    </source>
</evidence>
<evidence type="ECO:0000305" key="11">
    <source>
    </source>
</evidence>
<evidence type="ECO:0000312" key="12">
    <source>
        <dbReference type="HGNC" id="HGNC:17366"/>
    </source>
</evidence>
<evidence type="ECO:0007744" key="13">
    <source>
        <dbReference type="PDB" id="5L78"/>
    </source>
</evidence>
<evidence type="ECO:0007829" key="14">
    <source>
        <dbReference type="PDB" id="5L76"/>
    </source>
</evidence>
<evidence type="ECO:0007829" key="15">
    <source>
        <dbReference type="PDB" id="5O1P"/>
    </source>
</evidence>
<evidence type="ECO:0007829" key="16">
    <source>
        <dbReference type="PDB" id="8DDA"/>
    </source>
</evidence>
<evidence type="ECO:0007829" key="17">
    <source>
        <dbReference type="PDB" id="8E8T"/>
    </source>
</evidence>
<evidence type="ECO:0007829" key="18">
    <source>
        <dbReference type="PDB" id="8E8U"/>
    </source>
</evidence>
<proteinExistence type="evidence at protein level"/>
<protein>
    <recommendedName>
        <fullName evidence="10 11">Alpha-aminoadipic semialdehyde synthase, mitochondrial</fullName>
    </recommendedName>
    <alternativeName>
        <fullName evidence="10">LKR/SDH</fullName>
    </alternativeName>
    <domain>
        <recommendedName>
            <fullName evidence="10">Lysine ketoglutarate reductase</fullName>
            <shortName evidence="8">LKR</shortName>
            <shortName>LOR</shortName>
            <ecNumber evidence="4 6">1.5.1.8</ecNumber>
        </recommendedName>
    </domain>
    <domain>
        <recommendedName>
            <fullName evidence="10">Saccharopine dehydrogenase</fullName>
            <shortName evidence="8">SDH</shortName>
            <ecNumber evidence="4 6">1.5.1.9</ecNumber>
        </recommendedName>
    </domain>
</protein>
<dbReference type="EC" id="1.5.1.8" evidence="4 6"/>
<dbReference type="EC" id="1.5.1.9" evidence="4 6"/>
<dbReference type="EMBL" id="AF229180">
    <property type="protein sequence ID" value="AAF44328.1"/>
    <property type="molecule type" value="mRNA"/>
</dbReference>
<dbReference type="EMBL" id="AJ007714">
    <property type="protein sequence ID" value="CAA07619.2"/>
    <property type="molecule type" value="mRNA"/>
</dbReference>
<dbReference type="EMBL" id="AC006020">
    <property type="protein sequence ID" value="AAF03526.1"/>
    <property type="molecule type" value="Genomic_DNA"/>
</dbReference>
<dbReference type="CCDS" id="CCDS5783.1"/>
<dbReference type="RefSeq" id="NP_005754.2">
    <property type="nucleotide sequence ID" value="NM_005763.3"/>
</dbReference>
<dbReference type="PDB" id="5L76">
    <property type="method" value="X-ray"/>
    <property type="resolution" value="2.57 A"/>
    <property type="chains" value="A=455-926"/>
</dbReference>
<dbReference type="PDB" id="5L78">
    <property type="method" value="X-ray"/>
    <property type="resolution" value="2.68 A"/>
    <property type="chains" value="A/B=455-926"/>
</dbReference>
<dbReference type="PDB" id="5O1N">
    <property type="method" value="X-ray"/>
    <property type="resolution" value="2.28 A"/>
    <property type="chains" value="A=455-926"/>
</dbReference>
<dbReference type="PDB" id="5O1O">
    <property type="method" value="X-ray"/>
    <property type="resolution" value="2.48 A"/>
    <property type="chains" value="A/B=455-926"/>
</dbReference>
<dbReference type="PDB" id="5O1P">
    <property type="method" value="X-ray"/>
    <property type="resolution" value="1.90 A"/>
    <property type="chains" value="A=455-926"/>
</dbReference>
<dbReference type="PDB" id="8DDA">
    <property type="method" value="X-ray"/>
    <property type="resolution" value="2.40 A"/>
    <property type="chains" value="A/B/C/D=1-476"/>
</dbReference>
<dbReference type="PDB" id="8E8T">
    <property type="method" value="X-ray"/>
    <property type="resolution" value="2.18 A"/>
    <property type="chains" value="A/B=21-452"/>
</dbReference>
<dbReference type="PDB" id="8E8U">
    <property type="method" value="X-ray"/>
    <property type="resolution" value="2.65 A"/>
    <property type="chains" value="A/B/C/D=21-470"/>
</dbReference>
<dbReference type="PDB" id="8E8V">
    <property type="method" value="X-ray"/>
    <property type="resolution" value="2.45 A"/>
    <property type="chains" value="A/B/C/D=21-452"/>
</dbReference>
<dbReference type="PDBsum" id="5L76"/>
<dbReference type="PDBsum" id="5L78"/>
<dbReference type="PDBsum" id="5O1N"/>
<dbReference type="PDBsum" id="5O1O"/>
<dbReference type="PDBsum" id="5O1P"/>
<dbReference type="PDBsum" id="8DDA"/>
<dbReference type="PDBsum" id="8E8T"/>
<dbReference type="PDBsum" id="8E8U"/>
<dbReference type="PDBsum" id="8E8V"/>
<dbReference type="SMR" id="Q9UDR5"/>
<dbReference type="BioGRID" id="115459">
    <property type="interactions" value="75"/>
</dbReference>
<dbReference type="FunCoup" id="Q9UDR5">
    <property type="interactions" value="2327"/>
</dbReference>
<dbReference type="IntAct" id="Q9UDR5">
    <property type="interactions" value="23"/>
</dbReference>
<dbReference type="MINT" id="Q9UDR5"/>
<dbReference type="STRING" id="9606.ENSP00000403768"/>
<dbReference type="DrugBank" id="DB00142">
    <property type="generic name" value="Glutamic acid"/>
</dbReference>
<dbReference type="DrugBank" id="DB04207">
    <property type="generic name" value="L-Saccharopine"/>
</dbReference>
<dbReference type="DrugBank" id="DB00157">
    <property type="generic name" value="NADH"/>
</dbReference>
<dbReference type="DrugBank" id="DB02338">
    <property type="generic name" value="NADPH"/>
</dbReference>
<dbReference type="CarbonylDB" id="Q9UDR5"/>
<dbReference type="GlyGen" id="Q9UDR5">
    <property type="glycosylation" value="2 sites, 1 N-linked glycan (1 site)"/>
</dbReference>
<dbReference type="iPTMnet" id="Q9UDR5"/>
<dbReference type="MetOSite" id="Q9UDR5"/>
<dbReference type="PhosphoSitePlus" id="Q9UDR5"/>
<dbReference type="SwissPalm" id="Q9UDR5"/>
<dbReference type="BioMuta" id="AASS"/>
<dbReference type="DMDM" id="46396032"/>
<dbReference type="jPOST" id="Q9UDR5"/>
<dbReference type="MassIVE" id="Q9UDR5"/>
<dbReference type="PaxDb" id="9606-ENSP00000377040"/>
<dbReference type="PeptideAtlas" id="Q9UDR5"/>
<dbReference type="ProteomicsDB" id="84114"/>
<dbReference type="Pumba" id="Q9UDR5"/>
<dbReference type="ABCD" id="Q9UDR5">
    <property type="antibodies" value="1 sequenced antibody"/>
</dbReference>
<dbReference type="Antibodypedia" id="17598">
    <property type="antibodies" value="189 antibodies from 26 providers"/>
</dbReference>
<dbReference type="DNASU" id="10157"/>
<dbReference type="Ensembl" id="ENST00000393376.5">
    <property type="protein sequence ID" value="ENSP00000377040.1"/>
    <property type="gene ID" value="ENSG00000008311.16"/>
</dbReference>
<dbReference type="Ensembl" id="ENST00000417368.7">
    <property type="protein sequence ID" value="ENSP00000403768.2"/>
    <property type="gene ID" value="ENSG00000008311.16"/>
</dbReference>
<dbReference type="Ensembl" id="ENST00000679511.1">
    <property type="protein sequence ID" value="ENSP00000505381.1"/>
    <property type="gene ID" value="ENSG00000008311.16"/>
</dbReference>
<dbReference type="Ensembl" id="ENST00000679864.1">
    <property type="protein sequence ID" value="ENSP00000505958.1"/>
    <property type="gene ID" value="ENSG00000008311.16"/>
</dbReference>
<dbReference type="GeneID" id="10157"/>
<dbReference type="KEGG" id="hsa:10157"/>
<dbReference type="MANE-Select" id="ENST00000417368.7">
    <property type="protein sequence ID" value="ENSP00000403768.2"/>
    <property type="RefSeq nucleotide sequence ID" value="NM_005763.4"/>
    <property type="RefSeq protein sequence ID" value="NP_005754.2"/>
</dbReference>
<dbReference type="UCSC" id="uc003vka.4">
    <property type="organism name" value="human"/>
</dbReference>
<dbReference type="AGR" id="HGNC:17366"/>
<dbReference type="CTD" id="10157"/>
<dbReference type="DisGeNET" id="10157"/>
<dbReference type="GeneCards" id="AASS"/>
<dbReference type="HGNC" id="HGNC:17366">
    <property type="gene designation" value="AASS"/>
</dbReference>
<dbReference type="HPA" id="ENSG00000008311">
    <property type="expression patterns" value="Tissue enhanced (liver)"/>
</dbReference>
<dbReference type="MalaCards" id="AASS"/>
<dbReference type="MIM" id="238700">
    <property type="type" value="phenotype"/>
</dbReference>
<dbReference type="MIM" id="605113">
    <property type="type" value="gene"/>
</dbReference>
<dbReference type="MIM" id="616034">
    <property type="type" value="phenotype"/>
</dbReference>
<dbReference type="neXtProt" id="NX_Q9UDR5"/>
<dbReference type="OpenTargets" id="ENSG00000008311"/>
<dbReference type="Orphanet" id="2203">
    <property type="disease" value="Hyperlysinemia"/>
</dbReference>
<dbReference type="Orphanet" id="3124">
    <property type="disease" value="Saccharopinuria"/>
</dbReference>
<dbReference type="PharmGKB" id="PA24369"/>
<dbReference type="VEuPathDB" id="HostDB:ENSG00000008311"/>
<dbReference type="eggNOG" id="KOG0172">
    <property type="taxonomic scope" value="Eukaryota"/>
</dbReference>
<dbReference type="GeneTree" id="ENSGT00390000013249"/>
<dbReference type="HOGENOM" id="CLU_005231_0_1_1"/>
<dbReference type="InParanoid" id="Q9UDR5"/>
<dbReference type="OMA" id="TPHVHDI"/>
<dbReference type="OrthoDB" id="10059875at2759"/>
<dbReference type="PAN-GO" id="Q9UDR5">
    <property type="GO annotations" value="3 GO annotations based on evolutionary models"/>
</dbReference>
<dbReference type="PhylomeDB" id="Q9UDR5"/>
<dbReference type="TreeFam" id="TF105728"/>
<dbReference type="BioCyc" id="MetaCyc:HS00244-MONOMER"/>
<dbReference type="PathwayCommons" id="Q9UDR5"/>
<dbReference type="Reactome" id="R-HSA-71064">
    <property type="pathway name" value="Lysine catabolism"/>
</dbReference>
<dbReference type="SABIO-RK" id="Q9UDR5"/>
<dbReference type="SignaLink" id="Q9UDR5"/>
<dbReference type="UniPathway" id="UPA00868">
    <property type="reaction ID" value="UER00835"/>
</dbReference>
<dbReference type="UniPathway" id="UPA00868">
    <property type="reaction ID" value="UER00836"/>
</dbReference>
<dbReference type="BioGRID-ORCS" id="10157">
    <property type="hits" value="15 hits in 1160 CRISPR screens"/>
</dbReference>
<dbReference type="ChiTaRS" id="AASS">
    <property type="organism name" value="human"/>
</dbReference>
<dbReference type="GeneWiki" id="AASS"/>
<dbReference type="GenomeRNAi" id="10157"/>
<dbReference type="Pharos" id="Q9UDR5">
    <property type="development level" value="Tbio"/>
</dbReference>
<dbReference type="PRO" id="PR:Q9UDR5"/>
<dbReference type="Proteomes" id="UP000005640">
    <property type="component" value="Chromosome 7"/>
</dbReference>
<dbReference type="RNAct" id="Q9UDR5">
    <property type="molecule type" value="protein"/>
</dbReference>
<dbReference type="Bgee" id="ENSG00000008311">
    <property type="expression patterns" value="Expressed in mucosa of stomach and 177 other cell types or tissues"/>
</dbReference>
<dbReference type="ExpressionAtlas" id="Q9UDR5">
    <property type="expression patterns" value="baseline and differential"/>
</dbReference>
<dbReference type="GO" id="GO:0005737">
    <property type="term" value="C:cytoplasm"/>
    <property type="evidence" value="ECO:0000318"/>
    <property type="project" value="GO_Central"/>
</dbReference>
<dbReference type="GO" id="GO:0005829">
    <property type="term" value="C:cytosol"/>
    <property type="evidence" value="ECO:0000250"/>
    <property type="project" value="FlyBase"/>
</dbReference>
<dbReference type="GO" id="GO:0043231">
    <property type="term" value="C:intracellular membrane-bounded organelle"/>
    <property type="evidence" value="ECO:0000314"/>
    <property type="project" value="HPA"/>
</dbReference>
<dbReference type="GO" id="GO:0005759">
    <property type="term" value="C:mitochondrial matrix"/>
    <property type="evidence" value="ECO:0000304"/>
    <property type="project" value="Reactome"/>
</dbReference>
<dbReference type="GO" id="GO:0005739">
    <property type="term" value="C:mitochondrion"/>
    <property type="evidence" value="ECO:0000314"/>
    <property type="project" value="HPA"/>
</dbReference>
<dbReference type="GO" id="GO:0005634">
    <property type="term" value="C:nucleus"/>
    <property type="evidence" value="ECO:0000250"/>
    <property type="project" value="FlyBase"/>
</dbReference>
<dbReference type="GO" id="GO:0042393">
    <property type="term" value="F:histone binding"/>
    <property type="evidence" value="ECO:0000250"/>
    <property type="project" value="FlyBase"/>
</dbReference>
<dbReference type="GO" id="GO:0047131">
    <property type="term" value="F:saccharopine dehydrogenase (NAD+, L-glutamate-forming) activity"/>
    <property type="evidence" value="ECO:0000315"/>
    <property type="project" value="UniProtKB"/>
</dbReference>
<dbReference type="GO" id="GO:0004754">
    <property type="term" value="F:saccharopine dehydrogenase (NAD+, L-lysine-forming) activity"/>
    <property type="evidence" value="ECO:0000250"/>
    <property type="project" value="FlyBase"/>
</dbReference>
<dbReference type="GO" id="GO:0047130">
    <property type="term" value="F:saccharopine dehydrogenase (NADP+, L-lysine-forming) activity"/>
    <property type="evidence" value="ECO:0000315"/>
    <property type="project" value="UniProtKB"/>
</dbReference>
<dbReference type="GO" id="GO:0004753">
    <property type="term" value="F:saccharopine dehydrogenase activity"/>
    <property type="evidence" value="ECO:0000318"/>
    <property type="project" value="GO_Central"/>
</dbReference>
<dbReference type="GO" id="GO:0003714">
    <property type="term" value="F:transcription corepressor activity"/>
    <property type="evidence" value="ECO:0000250"/>
    <property type="project" value="FlyBase"/>
</dbReference>
<dbReference type="GO" id="GO:0033512">
    <property type="term" value="P:L-lysine catabolic process to acetyl-CoA via saccharopine"/>
    <property type="evidence" value="ECO:0007669"/>
    <property type="project" value="UniProtKB-UniPathway"/>
</dbReference>
<dbReference type="GO" id="GO:0019878">
    <property type="term" value="P:lysine biosynthetic process via aminoadipic acid"/>
    <property type="evidence" value="ECO:0000318"/>
    <property type="project" value="GO_Central"/>
</dbReference>
<dbReference type="GO" id="GO:0006554">
    <property type="term" value="P:lysine catabolic process"/>
    <property type="evidence" value="ECO:0000315"/>
    <property type="project" value="UniProtKB"/>
</dbReference>
<dbReference type="GO" id="GO:0000122">
    <property type="term" value="P:negative regulation of transcription by RNA polymerase II"/>
    <property type="evidence" value="ECO:0000250"/>
    <property type="project" value="FlyBase"/>
</dbReference>
<dbReference type="CDD" id="cd12189">
    <property type="entry name" value="LKR_SDH_like"/>
    <property type="match status" value="1"/>
</dbReference>
<dbReference type="FunFam" id="1.10.1870.10:FF:000001">
    <property type="entry name" value="Alpha-aminoadipic semialdehyde synthase, mitochondrial"/>
    <property type="match status" value="1"/>
</dbReference>
<dbReference type="FunFam" id="3.30.360.10:FF:000008">
    <property type="entry name" value="Alpha-aminoadipic semialdehyde synthase, mitochondrial"/>
    <property type="match status" value="1"/>
</dbReference>
<dbReference type="FunFam" id="3.40.50.720:FF:000087">
    <property type="entry name" value="alpha-aminoadipic semialdehyde synthase, mitochondrial"/>
    <property type="match status" value="1"/>
</dbReference>
<dbReference type="FunFam" id="3.40.50.720:FF:000072">
    <property type="entry name" value="Saccharopine dehydrogenase [NADP(+), L-glutamate-forming]"/>
    <property type="match status" value="1"/>
</dbReference>
<dbReference type="Gene3D" id="3.30.360.10">
    <property type="entry name" value="Dihydrodipicolinate Reductase, domain 2"/>
    <property type="match status" value="1"/>
</dbReference>
<dbReference type="Gene3D" id="1.10.1870.10">
    <property type="entry name" value="Domain 3, Saccharopine reductase"/>
    <property type="match status" value="1"/>
</dbReference>
<dbReference type="Gene3D" id="3.40.50.720">
    <property type="entry name" value="NAD(P)-binding Rossmann-like Domain"/>
    <property type="match status" value="3"/>
</dbReference>
<dbReference type="InterPro" id="IPR051168">
    <property type="entry name" value="AASS"/>
</dbReference>
<dbReference type="InterPro" id="IPR007886">
    <property type="entry name" value="AlaDH/PNT_N"/>
</dbReference>
<dbReference type="InterPro" id="IPR007698">
    <property type="entry name" value="AlaDH/PNT_NAD(H)-bd"/>
</dbReference>
<dbReference type="InterPro" id="IPR036291">
    <property type="entry name" value="NAD(P)-bd_dom_sf"/>
</dbReference>
<dbReference type="InterPro" id="IPR032095">
    <property type="entry name" value="Sacchrp_dh-like_C"/>
</dbReference>
<dbReference type="InterPro" id="IPR005097">
    <property type="entry name" value="Sacchrp_dh_NADP-bd"/>
</dbReference>
<dbReference type="PANTHER" id="PTHR11133:SF22">
    <property type="entry name" value="ALPHA-AMINOADIPIC SEMIALDEHYDE SYNTHASE, MITOCHONDRIAL"/>
    <property type="match status" value="1"/>
</dbReference>
<dbReference type="PANTHER" id="PTHR11133">
    <property type="entry name" value="SACCHAROPINE DEHYDROGENASE"/>
    <property type="match status" value="1"/>
</dbReference>
<dbReference type="Pfam" id="PF05222">
    <property type="entry name" value="AlaDh_PNT_N"/>
    <property type="match status" value="1"/>
</dbReference>
<dbReference type="Pfam" id="PF16653">
    <property type="entry name" value="Sacchrp_dh_C"/>
    <property type="match status" value="1"/>
</dbReference>
<dbReference type="Pfam" id="PF03435">
    <property type="entry name" value="Sacchrp_dh_NADP"/>
    <property type="match status" value="1"/>
</dbReference>
<dbReference type="SMART" id="SM01002">
    <property type="entry name" value="AlaDh_PNT_C"/>
    <property type="match status" value="1"/>
</dbReference>
<dbReference type="SMART" id="SM01003">
    <property type="entry name" value="AlaDh_PNT_N"/>
    <property type="match status" value="1"/>
</dbReference>
<dbReference type="SUPFAM" id="SSF52283">
    <property type="entry name" value="Formate/glycerate dehydrogenase catalytic domain-like"/>
    <property type="match status" value="1"/>
</dbReference>
<dbReference type="SUPFAM" id="SSF55347">
    <property type="entry name" value="Glyceraldehyde-3-phosphate dehydrogenase-like, C-terminal domain"/>
    <property type="match status" value="1"/>
</dbReference>
<dbReference type="SUPFAM" id="SSF51735">
    <property type="entry name" value="NAD(P)-binding Rossmann-fold domains"/>
    <property type="match status" value="1"/>
</dbReference>
<comment type="function">
    <text evidence="4 6">Bifunctional enzyme that catalyzes the first two steps in lysine degradation.</text>
</comment>
<comment type="catalytic activity">
    <reaction evidence="4 6">
        <text>L-saccharopine + NADP(+) + H2O = L-lysine + 2-oxoglutarate + NADPH + H(+)</text>
        <dbReference type="Rhea" id="RHEA:19373"/>
        <dbReference type="ChEBI" id="CHEBI:15377"/>
        <dbReference type="ChEBI" id="CHEBI:15378"/>
        <dbReference type="ChEBI" id="CHEBI:16810"/>
        <dbReference type="ChEBI" id="CHEBI:32551"/>
        <dbReference type="ChEBI" id="CHEBI:57783"/>
        <dbReference type="ChEBI" id="CHEBI:57951"/>
        <dbReference type="ChEBI" id="CHEBI:58349"/>
        <dbReference type="EC" id="1.5.1.8"/>
    </reaction>
    <physiologicalReaction direction="right-to-left" evidence="4">
        <dbReference type="Rhea" id="RHEA:19375"/>
    </physiologicalReaction>
</comment>
<comment type="catalytic activity">
    <reaction evidence="4 6">
        <text>L-saccharopine + NAD(+) + H2O = (S)-2-amino-6-oxohexanoate + L-glutamate + NADH + H(+)</text>
        <dbReference type="Rhea" id="RHEA:24520"/>
        <dbReference type="ChEBI" id="CHEBI:15377"/>
        <dbReference type="ChEBI" id="CHEBI:15378"/>
        <dbReference type="ChEBI" id="CHEBI:29985"/>
        <dbReference type="ChEBI" id="CHEBI:57540"/>
        <dbReference type="ChEBI" id="CHEBI:57945"/>
        <dbReference type="ChEBI" id="CHEBI:57951"/>
        <dbReference type="ChEBI" id="CHEBI:58321"/>
        <dbReference type="EC" id="1.5.1.9"/>
    </reaction>
    <physiologicalReaction direction="left-to-right" evidence="4">
        <dbReference type="Rhea" id="RHEA:24521"/>
    </physiologicalReaction>
</comment>
<comment type="pathway">
    <text evidence="4">Amino-acid degradation; L-lysine degradation via saccharopine pathway; glutaryl-CoA from L-lysine: step 1/6.</text>
</comment>
<comment type="pathway">
    <text evidence="4">Amino-acid degradation; L-lysine degradation via saccharopine pathway; glutaryl-CoA from L-lysine: step 2/6.</text>
</comment>
<comment type="subunit">
    <text evidence="2">Homotetramer.</text>
</comment>
<comment type="subcellular location">
    <subcellularLocation>
        <location evidence="6">Mitochondrion</location>
    </subcellularLocation>
</comment>
<comment type="tissue specificity">
    <text>Expressed in all 16 tissues examined with highest expression in the liver.</text>
</comment>
<comment type="induction">
    <text evidence="1">Induced by starvation.</text>
</comment>
<comment type="domain">
    <text evidence="8">The N-terminal and the C-terminal domains contain respectively the lysine ketoglutarate reductase and saccharopine dehydrogenase activity.</text>
</comment>
<comment type="disease" evidence="4">
    <disease id="DI-01773">
        <name>Hyperlysinemia, 1</name>
        <acronym>HYPLYS1</acronym>
        <description>An autosomal recessive metabolic condition with variable clinical features. Some patients present with non-specific seizures, hypotonia, or mildly delayed psychomotor development, and increased serum lysine and pipecolic acid on laboratory analysis. However, about half of the probands are reported to be asymptomatic, and hyperlysinemia is generally considered to be a benign metabolic variant.</description>
        <dbReference type="MIM" id="238700"/>
    </disease>
    <text evidence="11">The disease is caused by variants affecting the gene represented in this entry. In hyperlysinemia 1, both enzymatic functions of AASS are defective and patients have increased serum lysine and possibly increased saccharopine. Some individuals, however, retain significant amounts of lysine-ketoglutarate reductase and present with saccharopinuria, a metabolic condition with few, if any, clinical manifestations.</text>
</comment>
<comment type="disease" evidence="5">
    <disease id="DI-04240">
        <name>2,4-dienoyl-CoA reductase deficiency</name>
        <acronym>DECRD</acronym>
        <description>A rare, autosomal recessive, inborn error of polyunsaturated fatty acids and lysine metabolism, resulting in mitochondrial dysfunction. Affected individuals have a severe encephalopathy with neurologic and metabolic abnormalities beginning in early infancy. Laboratory studies show increased C10:2 carnitine levels and hyperlysinemia.</description>
        <dbReference type="MIM" id="616034"/>
    </disease>
    <text evidence="5">The protein represented in this entry is involved in disease pathogenesis. A selective decrease in mitochondrial NADP(H) levels due to NADK2 mutations causes a deficiency of NADPH-dependent mitochondrial enzymes, such as DECR1 and AASS.</text>
</comment>
<comment type="similarity">
    <text evidence="9">In the N-terminal section; belongs to the AlaDH/PNT family.</text>
</comment>
<comment type="similarity">
    <text evidence="9">In the C-terminal section; belongs to the saccharopine dehydrogenase family.</text>
</comment>
<accession>Q9UDR5</accession>
<accession>O95462</accession>
<reference key="1">
    <citation type="journal article" date="2000" name="Am. J. Hum. Genet.">
        <title>Identification of the alpha-aminoadipic semialdehyde synthase gene, which is defective in familial hyperlysinemia.</title>
        <authorList>
            <person name="Sacksteder K.A."/>
            <person name="Biery B.J."/>
            <person name="Morrell J.C."/>
            <person name="Goodman B.K."/>
            <person name="Geisbrecht B.V."/>
            <person name="Cox R.P."/>
            <person name="Gould S.J."/>
            <person name="Geraghty M.T."/>
        </authorList>
    </citation>
    <scope>NUCLEOTIDE SEQUENCE [MRNA]</scope>
    <scope>FUNCTION</scope>
    <scope>CATALYTIC ACTIVITY</scope>
    <scope>PATHWAY</scope>
    <scope>INVOLVEMENT IN HYPLYS1</scope>
    <scope>DOMAIN</scope>
    <scope>REGION</scope>
</reference>
<reference key="2">
    <citation type="submission" date="1999-05" db="EMBL/GenBank/DDBJ databases">
        <title>Cloning and expression analysis of the LKR/SDH gene in human tissues.</title>
        <authorList>
            <person name="Papes F."/>
            <person name="Kemper E.L."/>
            <person name="Cord-Neto G."/>
            <person name="Langone F."/>
            <person name="Arruda P."/>
        </authorList>
    </citation>
    <scope>NUCLEOTIDE SEQUENCE [MRNA]</scope>
    <source>
        <tissue>Liver</tissue>
    </source>
</reference>
<reference key="3">
    <citation type="journal article" date="2003" name="Nature">
        <title>The DNA sequence of human chromosome 7.</title>
        <authorList>
            <person name="Hillier L.W."/>
            <person name="Fulton R.S."/>
            <person name="Fulton L.A."/>
            <person name="Graves T.A."/>
            <person name="Pepin K.H."/>
            <person name="Wagner-McPherson C."/>
            <person name="Layman D."/>
            <person name="Maas J."/>
            <person name="Jaeger S."/>
            <person name="Walker R."/>
            <person name="Wylie K."/>
            <person name="Sekhon M."/>
            <person name="Becker M.C."/>
            <person name="O'Laughlin M.D."/>
            <person name="Schaller M.E."/>
            <person name="Fewell G.A."/>
            <person name="Delehaunty K.D."/>
            <person name="Miner T.L."/>
            <person name="Nash W.E."/>
            <person name="Cordes M."/>
            <person name="Du H."/>
            <person name="Sun H."/>
            <person name="Edwards J."/>
            <person name="Bradshaw-Cordum H."/>
            <person name="Ali J."/>
            <person name="Andrews S."/>
            <person name="Isak A."/>
            <person name="Vanbrunt A."/>
            <person name="Nguyen C."/>
            <person name="Du F."/>
            <person name="Lamar B."/>
            <person name="Courtney L."/>
            <person name="Kalicki J."/>
            <person name="Ozersky P."/>
            <person name="Bielicki L."/>
            <person name="Scott K."/>
            <person name="Holmes A."/>
            <person name="Harkins R."/>
            <person name="Harris A."/>
            <person name="Strong C.M."/>
            <person name="Hou S."/>
            <person name="Tomlinson C."/>
            <person name="Dauphin-Kohlberg S."/>
            <person name="Kozlowicz-Reilly A."/>
            <person name="Leonard S."/>
            <person name="Rohlfing T."/>
            <person name="Rock S.M."/>
            <person name="Tin-Wollam A.-M."/>
            <person name="Abbott A."/>
            <person name="Minx P."/>
            <person name="Maupin R."/>
            <person name="Strowmatt C."/>
            <person name="Latreille P."/>
            <person name="Miller N."/>
            <person name="Johnson D."/>
            <person name="Murray J."/>
            <person name="Woessner J.P."/>
            <person name="Wendl M.C."/>
            <person name="Yang S.-P."/>
            <person name="Schultz B.R."/>
            <person name="Wallis J.W."/>
            <person name="Spieth J."/>
            <person name="Bieri T.A."/>
            <person name="Nelson J.O."/>
            <person name="Berkowicz N."/>
            <person name="Wohldmann P.E."/>
            <person name="Cook L.L."/>
            <person name="Hickenbotham M.T."/>
            <person name="Eldred J."/>
            <person name="Williams D."/>
            <person name="Bedell J.A."/>
            <person name="Mardis E.R."/>
            <person name="Clifton S.W."/>
            <person name="Chissoe S.L."/>
            <person name="Marra M.A."/>
            <person name="Raymond C."/>
            <person name="Haugen E."/>
            <person name="Gillett W."/>
            <person name="Zhou Y."/>
            <person name="James R."/>
            <person name="Phelps K."/>
            <person name="Iadanoto S."/>
            <person name="Bubb K."/>
            <person name="Simms E."/>
            <person name="Levy R."/>
            <person name="Clendenning J."/>
            <person name="Kaul R."/>
            <person name="Kent W.J."/>
            <person name="Furey T.S."/>
            <person name="Baertsch R.A."/>
            <person name="Brent M.R."/>
            <person name="Keibler E."/>
            <person name="Flicek P."/>
            <person name="Bork P."/>
            <person name="Suyama M."/>
            <person name="Bailey J.A."/>
            <person name="Portnoy M.E."/>
            <person name="Torrents D."/>
            <person name="Chinwalla A.T."/>
            <person name="Gish W.R."/>
            <person name="Eddy S.R."/>
            <person name="McPherson J.D."/>
            <person name="Olson M.V."/>
            <person name="Eichler E.E."/>
            <person name="Green E.D."/>
            <person name="Waterston R.H."/>
            <person name="Wilson R.K."/>
        </authorList>
    </citation>
    <scope>NUCLEOTIDE SEQUENCE [LARGE SCALE GENOMIC DNA]</scope>
</reference>
<reference key="4">
    <citation type="journal article" date="1979" name="Am. J. Hum. Genet.">
        <title>Familial hyperlysinemia: enzyme studies, diagnostic methods, comments on terminology.</title>
        <authorList>
            <person name="Dancis J."/>
            <person name="Hutzler J."/>
            <person name="Cox R.P."/>
        </authorList>
    </citation>
    <scope>FUNCTION</scope>
    <scope>CATALYTIC ACTIVITY</scope>
    <scope>SUBCELLULAR LOCATION</scope>
    <scope>INVOLVEMENT IN HYPLYS1</scope>
</reference>
<reference key="5">
    <citation type="journal article" date="2011" name="BMC Syst. Biol.">
        <title>Initial characterization of the human central proteome.</title>
        <authorList>
            <person name="Burkard T.R."/>
            <person name="Planyavsky M."/>
            <person name="Kaupe I."/>
            <person name="Breitwieser F.P."/>
            <person name="Buerckstuemmer T."/>
            <person name="Bennett K.L."/>
            <person name="Superti-Furga G."/>
            <person name="Colinge J."/>
        </authorList>
    </citation>
    <scope>IDENTIFICATION BY MASS SPECTROMETRY [LARGE SCALE ANALYSIS]</scope>
</reference>
<reference key="6">
    <citation type="journal article" date="2014" name="Hum. Mol. Genet.">
        <title>Mitochondrial NADP(H) deficiency due to a mutation in NADK2 causes dienoyl-CoA reductase deficiency with hyperlysinemia.</title>
        <authorList>
            <person name="Houten S.M."/>
            <person name="Denis S."/>
            <person name="Te Brinke H."/>
            <person name="Jongejan A."/>
            <person name="van Kampen A.H."/>
            <person name="Bradley E.J."/>
            <person name="Baas F."/>
            <person name="Hennekam R.C."/>
            <person name="Millington D.S."/>
            <person name="Young S.P."/>
            <person name="Frazier D.M."/>
            <person name="Gucsavas-Calikoglu M."/>
            <person name="Wanders R.J."/>
        </authorList>
    </citation>
    <scope>INVOLVEMENT IN DECRD</scope>
</reference>
<reference key="7">
    <citation type="journal article" date="2014" name="J. Proteomics">
        <title>An enzyme assisted RP-RPLC approach for in-depth analysis of human liver phosphoproteome.</title>
        <authorList>
            <person name="Bian Y."/>
            <person name="Song C."/>
            <person name="Cheng K."/>
            <person name="Dong M."/>
            <person name="Wang F."/>
            <person name="Huang J."/>
            <person name="Sun D."/>
            <person name="Wang L."/>
            <person name="Ye M."/>
            <person name="Zou H."/>
        </authorList>
    </citation>
    <scope>IDENTIFICATION BY MASS SPECTROMETRY [LARGE SCALE ANALYSIS]</scope>
    <source>
        <tissue>Liver</tissue>
    </source>
</reference>
<reference evidence="13" key="8">
    <citation type="submission" date="2016-06" db="PDB data bank">
        <title>Crystal structure of human aminoadipate semialdehyde synthase, saccharopine dehydrogenase domain (in NAD+ bound form).</title>
        <authorList>
            <person name="Kopec J."/>
            <person name="Yue W.W."/>
        </authorList>
    </citation>
    <scope>X-RAY CRYSTALLOGRAPHY (2.68 ANGSTROMS) OF 455-926 IN COMPLEX WITH NAD</scope>
</reference>
<sequence length="926" mass="102132">MLQVHRTGLGRLGVSLSKGLHHKAVLAVRREDVNAWERRAPLAPKHIKGITNLGYKVLIQPSNRRAIHDKDYVKAGGILQEDISEACLILGVKRPPEEKLMSRKTYAFFSHTIKAQEANMGLLDEILKQEIRLIDYEKMVDHRGVRVVAFGQWAGVAGMINILHGMGLRLLALGHHTPFMHIGMAHNYRNSSQAVQAVRDAGYEISLGLMPKSIGPLTFVFTGTGNVSKGAQAIFNELPCEYVEPHELKEVSQTGDLRKVYGTVLSRHHHLVRKTDAVYDPAEYDKHPERYISRFNTDIAPYTTCLINGIYWEQNTPRLLTRQDAQSLLAPGKFSPAGVEGCPALPHKLVAICDISADTGGSIEFMTECTTIEHPFCMYDADQHIIHDSVEGSGILMCSIDNLPAQLPIEATECFGDMLYPYVEEMILSDATQPLESQNFSPVVRDAVITSNGTLPDKYKYIQTLRESRERAQSLSMGTRRKVLVLGSGYISEPVLEYLSRDGNIEITVGSDMKNQIEQLGKKYNINPVSMDICKQEEKLGFLVAKQDLVISLLPYVLHPLVAKACITNKVNMVTASYITPALKELEKSVEDAGITIIGELGLDPGLDHMLAMETIDKAKEVGATIESYISYCGGLPAPEHSNNPLRYKFSWSPVGVLMNVMQSATYLLDGKVVNVAGGISFLDAVTSMDFFPGLNLEGYPNRDSTKYAEIYGISSAHTLLRGTLRYKGYMKALNGFVKLGLINREALPAFRPEANPLTWKQLLCDLVGISPSSEHDVLKEAVLKKLGGDNTQLEAAEWLGLLGDEQVPQAESILDALSKHLVMKLSYGPEEKDMIVMRDSFGIRHPSGHLEHKTIDLVAYGDINGFSAMAKTVGLPTAMAAKMLLDGEIGAKGLMGPFSKEIYGPILERIKAEGIIYTTQSTIKP</sequence>
<gene>
    <name evidence="12" type="primary">AASS</name>
</gene>
<organism>
    <name type="scientific">Homo sapiens</name>
    <name type="common">Human</name>
    <dbReference type="NCBI Taxonomy" id="9606"/>
    <lineage>
        <taxon>Eukaryota</taxon>
        <taxon>Metazoa</taxon>
        <taxon>Chordata</taxon>
        <taxon>Craniata</taxon>
        <taxon>Vertebrata</taxon>
        <taxon>Euteleostomi</taxon>
        <taxon>Mammalia</taxon>
        <taxon>Eutheria</taxon>
        <taxon>Euarchontoglires</taxon>
        <taxon>Primates</taxon>
        <taxon>Haplorrhini</taxon>
        <taxon>Catarrhini</taxon>
        <taxon>Hominidae</taxon>
        <taxon>Homo</taxon>
    </lineage>
</organism>
<keyword id="KW-0002">3D-structure</keyword>
<keyword id="KW-0007">Acetylation</keyword>
<keyword id="KW-0496">Mitochondrion</keyword>
<keyword id="KW-0511">Multifunctional enzyme</keyword>
<keyword id="KW-0520">NAD</keyword>
<keyword id="KW-0521">NADP</keyword>
<keyword id="KW-0560">Oxidoreductase</keyword>
<keyword id="KW-1267">Proteomics identification</keyword>
<keyword id="KW-1185">Reference proteome</keyword>
<keyword id="KW-0809">Transit peptide</keyword>